<reference key="1">
    <citation type="journal article" date="2008" name="PLoS ONE">
        <title>Environmental adaptation: genomic analysis of the piezotolerant and psychrotolerant deep-sea iron reducing bacterium Shewanella piezotolerans WP3.</title>
        <authorList>
            <person name="Wang F."/>
            <person name="Wang J."/>
            <person name="Jian H."/>
            <person name="Zhang B."/>
            <person name="Li S."/>
            <person name="Wang F."/>
            <person name="Zeng X."/>
            <person name="Gao L."/>
            <person name="Bartlett D.H."/>
            <person name="Yu J."/>
            <person name="Hu S."/>
            <person name="Xiao X."/>
        </authorList>
    </citation>
    <scope>NUCLEOTIDE SEQUENCE [LARGE SCALE GENOMIC DNA]</scope>
    <source>
        <strain>WP3 / JCM 13877</strain>
    </source>
</reference>
<name>ASSY_SHEPW</name>
<evidence type="ECO:0000255" key="1">
    <source>
        <dbReference type="HAMAP-Rule" id="MF_00005"/>
    </source>
</evidence>
<comment type="catalytic activity">
    <reaction evidence="1">
        <text>L-citrulline + L-aspartate + ATP = 2-(N(omega)-L-arginino)succinate + AMP + diphosphate + H(+)</text>
        <dbReference type="Rhea" id="RHEA:10932"/>
        <dbReference type="ChEBI" id="CHEBI:15378"/>
        <dbReference type="ChEBI" id="CHEBI:29991"/>
        <dbReference type="ChEBI" id="CHEBI:30616"/>
        <dbReference type="ChEBI" id="CHEBI:33019"/>
        <dbReference type="ChEBI" id="CHEBI:57472"/>
        <dbReference type="ChEBI" id="CHEBI:57743"/>
        <dbReference type="ChEBI" id="CHEBI:456215"/>
        <dbReference type="EC" id="6.3.4.5"/>
    </reaction>
</comment>
<comment type="pathway">
    <text evidence="1">Amino-acid biosynthesis; L-arginine biosynthesis; L-arginine from L-ornithine and carbamoyl phosphate: step 2/3.</text>
</comment>
<comment type="subunit">
    <text evidence="1">Homotetramer.</text>
</comment>
<comment type="subcellular location">
    <subcellularLocation>
        <location evidence="1">Cytoplasm</location>
    </subcellularLocation>
</comment>
<comment type="similarity">
    <text evidence="1">Belongs to the argininosuccinate synthase family. Type 1 subfamily.</text>
</comment>
<dbReference type="EC" id="6.3.4.5" evidence="1"/>
<dbReference type="EMBL" id="CP000472">
    <property type="protein sequence ID" value="ACJ28814.1"/>
    <property type="molecule type" value="Genomic_DNA"/>
</dbReference>
<dbReference type="RefSeq" id="WP_020912176.1">
    <property type="nucleotide sequence ID" value="NC_011566.1"/>
</dbReference>
<dbReference type="SMR" id="B8CNI0"/>
<dbReference type="STRING" id="225849.swp_2058"/>
<dbReference type="KEGG" id="swp:swp_2058"/>
<dbReference type="eggNOG" id="COG0137">
    <property type="taxonomic scope" value="Bacteria"/>
</dbReference>
<dbReference type="HOGENOM" id="CLU_032784_4_2_6"/>
<dbReference type="OrthoDB" id="9801641at2"/>
<dbReference type="UniPathway" id="UPA00068">
    <property type="reaction ID" value="UER00113"/>
</dbReference>
<dbReference type="Proteomes" id="UP000000753">
    <property type="component" value="Chromosome"/>
</dbReference>
<dbReference type="GO" id="GO:0005737">
    <property type="term" value="C:cytoplasm"/>
    <property type="evidence" value="ECO:0007669"/>
    <property type="project" value="UniProtKB-SubCell"/>
</dbReference>
<dbReference type="GO" id="GO:0004055">
    <property type="term" value="F:argininosuccinate synthase activity"/>
    <property type="evidence" value="ECO:0007669"/>
    <property type="project" value="UniProtKB-UniRule"/>
</dbReference>
<dbReference type="GO" id="GO:0005524">
    <property type="term" value="F:ATP binding"/>
    <property type="evidence" value="ECO:0007669"/>
    <property type="project" value="UniProtKB-UniRule"/>
</dbReference>
<dbReference type="GO" id="GO:0000053">
    <property type="term" value="P:argininosuccinate metabolic process"/>
    <property type="evidence" value="ECO:0007669"/>
    <property type="project" value="TreeGrafter"/>
</dbReference>
<dbReference type="GO" id="GO:0006526">
    <property type="term" value="P:L-arginine biosynthetic process"/>
    <property type="evidence" value="ECO:0007669"/>
    <property type="project" value="UniProtKB-UniRule"/>
</dbReference>
<dbReference type="GO" id="GO:0000050">
    <property type="term" value="P:urea cycle"/>
    <property type="evidence" value="ECO:0007669"/>
    <property type="project" value="TreeGrafter"/>
</dbReference>
<dbReference type="CDD" id="cd01999">
    <property type="entry name" value="ASS"/>
    <property type="match status" value="1"/>
</dbReference>
<dbReference type="FunFam" id="3.40.50.620:FF:000019">
    <property type="entry name" value="Argininosuccinate synthase"/>
    <property type="match status" value="1"/>
</dbReference>
<dbReference type="FunFam" id="3.90.1260.10:FF:000007">
    <property type="entry name" value="Argininosuccinate synthase"/>
    <property type="match status" value="1"/>
</dbReference>
<dbReference type="Gene3D" id="3.90.1260.10">
    <property type="entry name" value="Argininosuccinate synthetase, chain A, domain 2"/>
    <property type="match status" value="1"/>
</dbReference>
<dbReference type="Gene3D" id="3.40.50.620">
    <property type="entry name" value="HUPs"/>
    <property type="match status" value="1"/>
</dbReference>
<dbReference type="Gene3D" id="1.20.5.470">
    <property type="entry name" value="Single helix bin"/>
    <property type="match status" value="1"/>
</dbReference>
<dbReference type="HAMAP" id="MF_00005">
    <property type="entry name" value="Arg_succ_synth_type1"/>
    <property type="match status" value="1"/>
</dbReference>
<dbReference type="InterPro" id="IPR048268">
    <property type="entry name" value="Arginosuc_syn_C"/>
</dbReference>
<dbReference type="InterPro" id="IPR048267">
    <property type="entry name" value="Arginosuc_syn_N"/>
</dbReference>
<dbReference type="InterPro" id="IPR001518">
    <property type="entry name" value="Arginosuc_synth"/>
</dbReference>
<dbReference type="InterPro" id="IPR018223">
    <property type="entry name" value="Arginosuc_synth_CS"/>
</dbReference>
<dbReference type="InterPro" id="IPR023434">
    <property type="entry name" value="Arginosuc_synth_type_1_subfam"/>
</dbReference>
<dbReference type="InterPro" id="IPR024074">
    <property type="entry name" value="AS_cat/multimer_dom_body"/>
</dbReference>
<dbReference type="InterPro" id="IPR014729">
    <property type="entry name" value="Rossmann-like_a/b/a_fold"/>
</dbReference>
<dbReference type="NCBIfam" id="TIGR00032">
    <property type="entry name" value="argG"/>
    <property type="match status" value="1"/>
</dbReference>
<dbReference type="NCBIfam" id="NF001770">
    <property type="entry name" value="PRK00509.1"/>
    <property type="match status" value="1"/>
</dbReference>
<dbReference type="PANTHER" id="PTHR11587">
    <property type="entry name" value="ARGININOSUCCINATE SYNTHASE"/>
    <property type="match status" value="1"/>
</dbReference>
<dbReference type="PANTHER" id="PTHR11587:SF2">
    <property type="entry name" value="ARGININOSUCCINATE SYNTHASE"/>
    <property type="match status" value="1"/>
</dbReference>
<dbReference type="Pfam" id="PF20979">
    <property type="entry name" value="Arginosuc_syn_C"/>
    <property type="match status" value="1"/>
</dbReference>
<dbReference type="Pfam" id="PF00764">
    <property type="entry name" value="Arginosuc_synth"/>
    <property type="match status" value="1"/>
</dbReference>
<dbReference type="SUPFAM" id="SSF52402">
    <property type="entry name" value="Adenine nucleotide alpha hydrolases-like"/>
    <property type="match status" value="1"/>
</dbReference>
<dbReference type="SUPFAM" id="SSF69864">
    <property type="entry name" value="Argininosuccinate synthetase, C-terminal domain"/>
    <property type="match status" value="1"/>
</dbReference>
<dbReference type="PROSITE" id="PS00564">
    <property type="entry name" value="ARGININOSUCCIN_SYN_1"/>
    <property type="match status" value="1"/>
</dbReference>
<dbReference type="PROSITE" id="PS00565">
    <property type="entry name" value="ARGININOSUCCIN_SYN_2"/>
    <property type="match status" value="1"/>
</dbReference>
<gene>
    <name evidence="1" type="primary">argG</name>
    <name type="ordered locus">swp_2058</name>
</gene>
<protein>
    <recommendedName>
        <fullName evidence="1">Argininosuccinate synthase</fullName>
        <ecNumber evidence="1">6.3.4.5</ecNumber>
    </recommendedName>
    <alternativeName>
        <fullName evidence="1">Citrulline--aspartate ligase</fullName>
    </alternativeName>
</protein>
<keyword id="KW-0028">Amino-acid biosynthesis</keyword>
<keyword id="KW-0055">Arginine biosynthesis</keyword>
<keyword id="KW-0067">ATP-binding</keyword>
<keyword id="KW-0963">Cytoplasm</keyword>
<keyword id="KW-0436">Ligase</keyword>
<keyword id="KW-0547">Nucleotide-binding</keyword>
<organism>
    <name type="scientific">Shewanella piezotolerans (strain WP3 / JCM 13877)</name>
    <dbReference type="NCBI Taxonomy" id="225849"/>
    <lineage>
        <taxon>Bacteria</taxon>
        <taxon>Pseudomonadati</taxon>
        <taxon>Pseudomonadota</taxon>
        <taxon>Gammaproteobacteria</taxon>
        <taxon>Alteromonadales</taxon>
        <taxon>Shewanellaceae</taxon>
        <taxon>Shewanella</taxon>
    </lineage>
</organism>
<feature type="chain" id="PRO_1000116193" description="Argininosuccinate synthase">
    <location>
        <begin position="1"/>
        <end position="409"/>
    </location>
</feature>
<feature type="binding site" evidence="1">
    <location>
        <begin position="16"/>
        <end position="24"/>
    </location>
    <ligand>
        <name>ATP</name>
        <dbReference type="ChEBI" id="CHEBI:30616"/>
    </ligand>
</feature>
<feature type="binding site" evidence="1">
    <location>
        <position position="44"/>
    </location>
    <ligand>
        <name>ATP</name>
        <dbReference type="ChEBI" id="CHEBI:30616"/>
    </ligand>
</feature>
<feature type="binding site" evidence="1">
    <location>
        <position position="96"/>
    </location>
    <ligand>
        <name>L-citrulline</name>
        <dbReference type="ChEBI" id="CHEBI:57743"/>
    </ligand>
</feature>
<feature type="binding site" evidence="1">
    <location>
        <position position="101"/>
    </location>
    <ligand>
        <name>L-citrulline</name>
        <dbReference type="ChEBI" id="CHEBI:57743"/>
    </ligand>
</feature>
<feature type="binding site" evidence="1">
    <location>
        <position position="126"/>
    </location>
    <ligand>
        <name>ATP</name>
        <dbReference type="ChEBI" id="CHEBI:30616"/>
    </ligand>
</feature>
<feature type="binding site" evidence="1">
    <location>
        <position position="128"/>
    </location>
    <ligand>
        <name>L-aspartate</name>
        <dbReference type="ChEBI" id="CHEBI:29991"/>
    </ligand>
</feature>
<feature type="binding site" evidence="1">
    <location>
        <position position="132"/>
    </location>
    <ligand>
        <name>L-aspartate</name>
        <dbReference type="ChEBI" id="CHEBI:29991"/>
    </ligand>
</feature>
<feature type="binding site" evidence="1">
    <location>
        <position position="132"/>
    </location>
    <ligand>
        <name>L-citrulline</name>
        <dbReference type="ChEBI" id="CHEBI:57743"/>
    </ligand>
</feature>
<feature type="binding site" evidence="1">
    <location>
        <position position="133"/>
    </location>
    <ligand>
        <name>L-aspartate</name>
        <dbReference type="ChEBI" id="CHEBI:29991"/>
    </ligand>
</feature>
<feature type="binding site" evidence="1">
    <location>
        <position position="136"/>
    </location>
    <ligand>
        <name>L-citrulline</name>
        <dbReference type="ChEBI" id="CHEBI:57743"/>
    </ligand>
</feature>
<feature type="binding site" evidence="1">
    <location>
        <position position="185"/>
    </location>
    <ligand>
        <name>L-citrulline</name>
        <dbReference type="ChEBI" id="CHEBI:57743"/>
    </ligand>
</feature>
<feature type="binding site" evidence="1">
    <location>
        <position position="194"/>
    </location>
    <ligand>
        <name>L-citrulline</name>
        <dbReference type="ChEBI" id="CHEBI:57743"/>
    </ligand>
</feature>
<feature type="binding site" evidence="1">
    <location>
        <position position="270"/>
    </location>
    <ligand>
        <name>L-citrulline</name>
        <dbReference type="ChEBI" id="CHEBI:57743"/>
    </ligand>
</feature>
<feature type="binding site" evidence="1">
    <location>
        <position position="282"/>
    </location>
    <ligand>
        <name>L-citrulline</name>
        <dbReference type="ChEBI" id="CHEBI:57743"/>
    </ligand>
</feature>
<sequence length="409" mass="44884">MSAETKKTDVKKVVLAYSGGLDTSAIIPWLKETYDNCEIVAFCADVGQGSEELEGLHEKAIASGASECYIVDLKEELVADYIYPTIATGAIYEGTYLLGTSMARPIIAKAQVEVARKVGADAVCHGCTGKGNDQVRFEGCFAALAPDLKVIAPWREWEMVSREDLLDYLAERNIETTASATKIYSRDANAWHISHEGGELEDPWNEPTQGVWTMTVAPEDAPNTPEYVALELEQGKITKVNGEALSPYKALMLLNDLAGAHGVGRIDITENRLVGMKSRGCYETPGGTVMFAALRAIEELVLDKTSREWREQVGAQMAHLVYDGRWFTPLCESLLGASKPLADLVNGEVVIKLYKGQASAVKKRSPNSLYSEEFATFGEDDVYNQKDAEGFIRLYSLSSRIRALHGHNK</sequence>
<accession>B8CNI0</accession>
<proteinExistence type="inferred from homology"/>